<comment type="catalytic activity">
    <reaction>
        <text>(S)-4-amino-5-oxopentanoate = 5-aminolevulinate</text>
        <dbReference type="Rhea" id="RHEA:14265"/>
        <dbReference type="ChEBI" id="CHEBI:57501"/>
        <dbReference type="ChEBI" id="CHEBI:356416"/>
        <dbReference type="EC" id="5.4.3.8"/>
    </reaction>
</comment>
<comment type="cofactor">
    <cofactor evidence="1">
        <name>pyridoxal 5'-phosphate</name>
        <dbReference type="ChEBI" id="CHEBI:597326"/>
    </cofactor>
</comment>
<comment type="pathway">
    <text>Porphyrin-containing compound metabolism; protoporphyrin-IX biosynthesis; 5-aminolevulinate from L-glutamyl-tRNA(Glu): step 2/2.</text>
</comment>
<comment type="subunit">
    <text evidence="1">Homodimer.</text>
</comment>
<comment type="subcellular location">
    <subcellularLocation>
        <location evidence="2">Cytoplasm</location>
    </subcellularLocation>
</comment>
<comment type="similarity">
    <text evidence="2">Belongs to the class-III pyridoxal-phosphate-dependent aminotransferase family. HemL subfamily.</text>
</comment>
<evidence type="ECO:0000250" key="1"/>
<evidence type="ECO:0000305" key="2"/>
<accession>E1W874</accession>
<accession>O87664</accession>
<accession>P21267</accession>
<organism>
    <name type="scientific">Salmonella typhimurium (strain SL1344)</name>
    <dbReference type="NCBI Taxonomy" id="216597"/>
    <lineage>
        <taxon>Bacteria</taxon>
        <taxon>Pseudomonadati</taxon>
        <taxon>Pseudomonadota</taxon>
        <taxon>Gammaproteobacteria</taxon>
        <taxon>Enterobacterales</taxon>
        <taxon>Enterobacteriaceae</taxon>
        <taxon>Salmonella</taxon>
    </lineage>
</organism>
<gene>
    <name type="primary">hemL</name>
    <name type="ordered locus">SL1344_0203</name>
</gene>
<keyword id="KW-0963">Cytoplasm</keyword>
<keyword id="KW-0413">Isomerase</keyword>
<keyword id="KW-0627">Porphyrin biosynthesis</keyword>
<keyword id="KW-0663">Pyridoxal phosphate</keyword>
<reference key="1">
    <citation type="submission" date="2000-08" db="EMBL/GenBank/DDBJ databases">
        <title>Selection of small-colony variants of Salmonella enterica serotype Typhimurium due to prolonged intracellular residence within non-phagocytic cells.</title>
        <authorList>
            <person name="Cano D.A."/>
            <person name="Martinez-Moya M."/>
            <person name="Casadesus J."/>
            <person name="Garcia-del Portillo F."/>
        </authorList>
    </citation>
    <scope>NUCLEOTIDE SEQUENCE [GENOMIC DNA]</scope>
    <source>
        <strain>SL1344</strain>
    </source>
</reference>
<reference key="2">
    <citation type="journal article" date="2012" name="Proc. Natl. Acad. Sci. U.S.A.">
        <title>The transcriptional landscape and small RNAs of Salmonella enterica serovar Typhimurium.</title>
        <authorList>
            <person name="Kroger C."/>
            <person name="Dillon S.C."/>
            <person name="Cameron A.D."/>
            <person name="Papenfort K."/>
            <person name="Sivasankaran S.K."/>
            <person name="Hokamp K."/>
            <person name="Chao Y."/>
            <person name="Sittka A."/>
            <person name="Hebrard M."/>
            <person name="Handler K."/>
            <person name="Colgan A."/>
            <person name="Leekitcharoenphon P."/>
            <person name="Langridge G.C."/>
            <person name="Lohan A.J."/>
            <person name="Loftus B."/>
            <person name="Lucchini S."/>
            <person name="Ussery D.W."/>
            <person name="Dorman C.J."/>
            <person name="Thomson N.R."/>
            <person name="Vogel J."/>
            <person name="Hinton J.C."/>
        </authorList>
    </citation>
    <scope>NUCLEOTIDE SEQUENCE [LARGE SCALE GENOMIC DNA]</scope>
    <source>
        <strain>SL1344</strain>
    </source>
</reference>
<name>GSA_SALTS</name>
<protein>
    <recommendedName>
        <fullName>Glutamate-1-semialdehyde 2,1-aminomutase</fullName>
        <shortName>GSA</shortName>
        <ecNumber>5.4.3.8</ecNumber>
    </recommendedName>
    <alternativeName>
        <fullName>Glutamate-1-semialdehyde aminotransferase</fullName>
        <shortName>GSA-AT</shortName>
    </alternativeName>
</protein>
<feature type="chain" id="PRO_0000405418" description="Glutamate-1-semialdehyde 2,1-aminomutase">
    <location>
        <begin position="1"/>
        <end position="426"/>
    </location>
</feature>
<feature type="modified residue" description="N6-(pyridoxal phosphate)lysine" evidence="1">
    <location>
        <position position="265"/>
    </location>
</feature>
<sequence length="426" mass="45325">MSKSENLYSAARELIPGGVNSPVRAFTGVGGTPLFIEKADGAYLYDVDGKAYIDYVGSWGPMVLGHNHPAIRNAVIEAAERGLSFGAPTEMEVKMAELVTNLVPTMDMVRMVNSGTEATMSAIRLARGFTGRDKIIKFEGCYHGHADCLLVKAGSGALTLGQPNSPGVPADFAKHTLTCTYNDLTSVRAAFEQYPQEIASIIVEPVAGNMNCVPPLPEFLPGLRALCDEFGALLIIDEVMTGFRVALAGAQDYYGVVPDLTCLGKIIGGGMPVGAFGGRRDVMDALAPTGPVYQAGTLSGNPIAMAAGFACLNEVAQPGIHETLDELTTRLAEGLCEAAQEAGIPLVVNHVGGMFGIFFTDAESVTCYQDVMACDVERFKRFFHLMLEEGVYLAPSAFEAGFMSVAHSMDDINNTIDAARRVFAKL</sequence>
<proteinExistence type="inferred from homology"/>
<dbReference type="EC" id="5.4.3.8"/>
<dbReference type="EMBL" id="AJ278741">
    <property type="protein sequence ID" value="CAC03102.1"/>
    <property type="molecule type" value="Genomic_DNA"/>
</dbReference>
<dbReference type="EMBL" id="FQ312003">
    <property type="protein sequence ID" value="CBW16305.1"/>
    <property type="molecule type" value="Genomic_DNA"/>
</dbReference>
<dbReference type="RefSeq" id="WP_000045268.1">
    <property type="nucleotide sequence ID" value="NZ_QASL01000007.1"/>
</dbReference>
<dbReference type="SMR" id="E1W874"/>
<dbReference type="KEGG" id="sey:SL1344_0203"/>
<dbReference type="PATRIC" id="fig|216597.6.peg.224"/>
<dbReference type="HOGENOM" id="CLU_016922_1_5_6"/>
<dbReference type="BioCyc" id="SENT216597:SL1344_RS01025-MONOMER"/>
<dbReference type="UniPathway" id="UPA00251">
    <property type="reaction ID" value="UER00317"/>
</dbReference>
<dbReference type="Proteomes" id="UP000008962">
    <property type="component" value="Chromosome"/>
</dbReference>
<dbReference type="GO" id="GO:0005737">
    <property type="term" value="C:cytoplasm"/>
    <property type="evidence" value="ECO:0007669"/>
    <property type="project" value="UniProtKB-SubCell"/>
</dbReference>
<dbReference type="GO" id="GO:0042286">
    <property type="term" value="F:glutamate-1-semialdehyde 2,1-aminomutase activity"/>
    <property type="evidence" value="ECO:0007669"/>
    <property type="project" value="UniProtKB-UniRule"/>
</dbReference>
<dbReference type="GO" id="GO:0030170">
    <property type="term" value="F:pyridoxal phosphate binding"/>
    <property type="evidence" value="ECO:0007669"/>
    <property type="project" value="InterPro"/>
</dbReference>
<dbReference type="GO" id="GO:0008483">
    <property type="term" value="F:transaminase activity"/>
    <property type="evidence" value="ECO:0007669"/>
    <property type="project" value="InterPro"/>
</dbReference>
<dbReference type="GO" id="GO:0006782">
    <property type="term" value="P:protoporphyrinogen IX biosynthetic process"/>
    <property type="evidence" value="ECO:0007669"/>
    <property type="project" value="UniProtKB-UniRule"/>
</dbReference>
<dbReference type="CDD" id="cd00610">
    <property type="entry name" value="OAT_like"/>
    <property type="match status" value="1"/>
</dbReference>
<dbReference type="FunFam" id="3.40.640.10:FF:000021">
    <property type="entry name" value="Glutamate-1-semialdehyde 2,1-aminomutase"/>
    <property type="match status" value="1"/>
</dbReference>
<dbReference type="FunFam" id="3.90.1150.10:FF:000012">
    <property type="entry name" value="Glutamate-1-semialdehyde 2,1-aminomutase"/>
    <property type="match status" value="1"/>
</dbReference>
<dbReference type="Gene3D" id="3.90.1150.10">
    <property type="entry name" value="Aspartate Aminotransferase, domain 1"/>
    <property type="match status" value="1"/>
</dbReference>
<dbReference type="Gene3D" id="3.40.640.10">
    <property type="entry name" value="Type I PLP-dependent aspartate aminotransferase-like (Major domain)"/>
    <property type="match status" value="1"/>
</dbReference>
<dbReference type="HAMAP" id="MF_00375">
    <property type="entry name" value="HemL_aminotrans_3"/>
    <property type="match status" value="1"/>
</dbReference>
<dbReference type="InterPro" id="IPR004639">
    <property type="entry name" value="4pyrrol_synth_GluAld_NH2Trfase"/>
</dbReference>
<dbReference type="InterPro" id="IPR005814">
    <property type="entry name" value="Aminotrans_3"/>
</dbReference>
<dbReference type="InterPro" id="IPR049704">
    <property type="entry name" value="Aminotrans_3_PPA_site"/>
</dbReference>
<dbReference type="InterPro" id="IPR015424">
    <property type="entry name" value="PyrdxlP-dep_Trfase"/>
</dbReference>
<dbReference type="InterPro" id="IPR015421">
    <property type="entry name" value="PyrdxlP-dep_Trfase_major"/>
</dbReference>
<dbReference type="InterPro" id="IPR015422">
    <property type="entry name" value="PyrdxlP-dep_Trfase_small"/>
</dbReference>
<dbReference type="NCBIfam" id="TIGR00713">
    <property type="entry name" value="hemL"/>
    <property type="match status" value="1"/>
</dbReference>
<dbReference type="NCBIfam" id="NF000818">
    <property type="entry name" value="PRK00062.1"/>
    <property type="match status" value="1"/>
</dbReference>
<dbReference type="PANTHER" id="PTHR43713">
    <property type="entry name" value="GLUTAMATE-1-SEMIALDEHYDE 2,1-AMINOMUTASE"/>
    <property type="match status" value="1"/>
</dbReference>
<dbReference type="PANTHER" id="PTHR43713:SF3">
    <property type="entry name" value="GLUTAMATE-1-SEMIALDEHYDE 2,1-AMINOMUTASE 1, CHLOROPLASTIC-RELATED"/>
    <property type="match status" value="1"/>
</dbReference>
<dbReference type="Pfam" id="PF00202">
    <property type="entry name" value="Aminotran_3"/>
    <property type="match status" value="1"/>
</dbReference>
<dbReference type="SUPFAM" id="SSF53383">
    <property type="entry name" value="PLP-dependent transferases"/>
    <property type="match status" value="1"/>
</dbReference>
<dbReference type="PROSITE" id="PS00600">
    <property type="entry name" value="AA_TRANSFER_CLASS_3"/>
    <property type="match status" value="1"/>
</dbReference>